<sequence length="197" mass="21033">MQKVVLATGNAGKVRELASLLSDFGLDVVAQTELGVDSAEETGLTFIENAILKARHAAKMTGLPAIADDSGLAVDVLGGAPGIYSARYSGENATDQQNLEKLLHTLRDVPDDKRQARFHCVLVYLRHAEDPTPIVCHGSWPGVITRQAAGNGGFGYDPIFFVPSEGKTAAELTREEKSAISHRGQALKLLLDALRNG</sequence>
<proteinExistence type="inferred from homology"/>
<feature type="chain" id="PRO_0000178223" description="dITP/XTP pyrophosphatase">
    <location>
        <begin position="1"/>
        <end position="197"/>
    </location>
</feature>
<feature type="active site" description="Proton acceptor" evidence="1">
    <location>
        <position position="69"/>
    </location>
</feature>
<feature type="binding site" evidence="1">
    <location>
        <begin position="8"/>
        <end position="13"/>
    </location>
    <ligand>
        <name>substrate</name>
    </ligand>
</feature>
<feature type="binding site" evidence="1">
    <location>
        <position position="40"/>
    </location>
    <ligand>
        <name>Mg(2+)</name>
        <dbReference type="ChEBI" id="CHEBI:18420"/>
    </ligand>
</feature>
<feature type="binding site" evidence="1">
    <location>
        <position position="69"/>
    </location>
    <ligand>
        <name>Mg(2+)</name>
        <dbReference type="ChEBI" id="CHEBI:18420"/>
    </ligand>
</feature>
<feature type="binding site" evidence="1">
    <location>
        <position position="70"/>
    </location>
    <ligand>
        <name>substrate</name>
    </ligand>
</feature>
<feature type="binding site" evidence="1">
    <location>
        <begin position="154"/>
        <end position="157"/>
    </location>
    <ligand>
        <name>substrate</name>
    </ligand>
</feature>
<feature type="binding site" evidence="1">
    <location>
        <position position="177"/>
    </location>
    <ligand>
        <name>substrate</name>
    </ligand>
</feature>
<feature type="binding site" evidence="1">
    <location>
        <begin position="182"/>
        <end position="183"/>
    </location>
    <ligand>
        <name>substrate</name>
    </ligand>
</feature>
<gene>
    <name type="primary">rdgB</name>
    <name type="synonym">yggV</name>
    <name type="ordered locus">STM3103</name>
</gene>
<keyword id="KW-0378">Hydrolase</keyword>
<keyword id="KW-0460">Magnesium</keyword>
<keyword id="KW-0479">Metal-binding</keyword>
<keyword id="KW-0546">Nucleotide metabolism</keyword>
<keyword id="KW-0547">Nucleotide-binding</keyword>
<keyword id="KW-1185">Reference proteome</keyword>
<protein>
    <recommendedName>
        <fullName evidence="1">dITP/XTP pyrophosphatase</fullName>
        <ecNumber evidence="1">3.6.1.66</ecNumber>
    </recommendedName>
    <alternativeName>
        <fullName evidence="1">Non-canonical purine NTP pyrophosphatase</fullName>
    </alternativeName>
    <alternativeName>
        <fullName evidence="1">Non-standard purine NTP pyrophosphatase</fullName>
    </alternativeName>
    <alternativeName>
        <fullName evidence="1">Nucleoside-triphosphate diphosphatase</fullName>
    </alternativeName>
    <alternativeName>
        <fullName evidence="1">Nucleoside-triphosphate pyrophosphatase</fullName>
        <shortName evidence="1">NTPase</shortName>
    </alternativeName>
</protein>
<reference key="1">
    <citation type="journal article" date="2001" name="Nature">
        <title>Complete genome sequence of Salmonella enterica serovar Typhimurium LT2.</title>
        <authorList>
            <person name="McClelland M."/>
            <person name="Sanderson K.E."/>
            <person name="Spieth J."/>
            <person name="Clifton S.W."/>
            <person name="Latreille P."/>
            <person name="Courtney L."/>
            <person name="Porwollik S."/>
            <person name="Ali J."/>
            <person name="Dante M."/>
            <person name="Du F."/>
            <person name="Hou S."/>
            <person name="Layman D."/>
            <person name="Leonard S."/>
            <person name="Nguyen C."/>
            <person name="Scott K."/>
            <person name="Holmes A."/>
            <person name="Grewal N."/>
            <person name="Mulvaney E."/>
            <person name="Ryan E."/>
            <person name="Sun H."/>
            <person name="Florea L."/>
            <person name="Miller W."/>
            <person name="Stoneking T."/>
            <person name="Nhan M."/>
            <person name="Waterston R."/>
            <person name="Wilson R.K."/>
        </authorList>
    </citation>
    <scope>NUCLEOTIDE SEQUENCE [LARGE SCALE GENOMIC DNA]</scope>
    <source>
        <strain>LT2 / SGSC1412 / ATCC 700720</strain>
    </source>
</reference>
<name>IXTPA_SALTY</name>
<dbReference type="EC" id="3.6.1.66" evidence="1"/>
<dbReference type="EMBL" id="AE006468">
    <property type="protein sequence ID" value="AAL21978.1"/>
    <property type="molecule type" value="Genomic_DNA"/>
</dbReference>
<dbReference type="RefSeq" id="NP_462019.1">
    <property type="nucleotide sequence ID" value="NC_003197.2"/>
</dbReference>
<dbReference type="RefSeq" id="WP_001174769.1">
    <property type="nucleotide sequence ID" value="NC_003197.2"/>
</dbReference>
<dbReference type="SMR" id="Q8ZM45"/>
<dbReference type="STRING" id="99287.STM3103"/>
<dbReference type="PaxDb" id="99287-STM3103"/>
<dbReference type="GeneID" id="1254626"/>
<dbReference type="KEGG" id="stm:STM3103"/>
<dbReference type="PATRIC" id="fig|99287.12.peg.3288"/>
<dbReference type="HOGENOM" id="CLU_082080_0_3_6"/>
<dbReference type="OMA" id="YDPIFQP"/>
<dbReference type="PhylomeDB" id="Q8ZM45"/>
<dbReference type="BioCyc" id="SENT99287:STM3103-MONOMER"/>
<dbReference type="Proteomes" id="UP000001014">
    <property type="component" value="Chromosome"/>
</dbReference>
<dbReference type="GO" id="GO:0005737">
    <property type="term" value="C:cytoplasm"/>
    <property type="evidence" value="ECO:0000318"/>
    <property type="project" value="GO_Central"/>
</dbReference>
<dbReference type="GO" id="GO:0005829">
    <property type="term" value="C:cytosol"/>
    <property type="evidence" value="ECO:0000318"/>
    <property type="project" value="GO_Central"/>
</dbReference>
<dbReference type="GO" id="GO:0035870">
    <property type="term" value="F:dITP diphosphatase activity"/>
    <property type="evidence" value="ECO:0007669"/>
    <property type="project" value="RHEA"/>
</dbReference>
<dbReference type="GO" id="GO:0036220">
    <property type="term" value="F:ITP diphosphatase activity"/>
    <property type="evidence" value="ECO:0007669"/>
    <property type="project" value="UniProtKB-EC"/>
</dbReference>
<dbReference type="GO" id="GO:0046872">
    <property type="term" value="F:metal ion binding"/>
    <property type="evidence" value="ECO:0007669"/>
    <property type="project" value="UniProtKB-KW"/>
</dbReference>
<dbReference type="GO" id="GO:0047429">
    <property type="term" value="F:nucleoside triphosphate diphosphatase activity"/>
    <property type="evidence" value="ECO:0000318"/>
    <property type="project" value="GO_Central"/>
</dbReference>
<dbReference type="GO" id="GO:0000166">
    <property type="term" value="F:nucleotide binding"/>
    <property type="evidence" value="ECO:0007669"/>
    <property type="project" value="UniProtKB-KW"/>
</dbReference>
<dbReference type="GO" id="GO:0017111">
    <property type="term" value="F:ribonucleoside triphosphate phosphatase activity"/>
    <property type="evidence" value="ECO:0007669"/>
    <property type="project" value="InterPro"/>
</dbReference>
<dbReference type="GO" id="GO:0036222">
    <property type="term" value="F:XTP diphosphatase activity"/>
    <property type="evidence" value="ECO:0007669"/>
    <property type="project" value="RHEA"/>
</dbReference>
<dbReference type="GO" id="GO:0009143">
    <property type="term" value="P:nucleoside triphosphate catabolic process"/>
    <property type="evidence" value="ECO:0000318"/>
    <property type="project" value="GO_Central"/>
</dbReference>
<dbReference type="GO" id="GO:0009117">
    <property type="term" value="P:nucleotide metabolic process"/>
    <property type="evidence" value="ECO:0007669"/>
    <property type="project" value="UniProtKB-KW"/>
</dbReference>
<dbReference type="GO" id="GO:0009146">
    <property type="term" value="P:purine nucleoside triphosphate catabolic process"/>
    <property type="evidence" value="ECO:0007669"/>
    <property type="project" value="UniProtKB-UniRule"/>
</dbReference>
<dbReference type="CDD" id="cd00515">
    <property type="entry name" value="HAM1"/>
    <property type="match status" value="1"/>
</dbReference>
<dbReference type="FunFam" id="3.90.950.10:FF:000001">
    <property type="entry name" value="dITP/XTP pyrophosphatase"/>
    <property type="match status" value="1"/>
</dbReference>
<dbReference type="Gene3D" id="3.90.950.10">
    <property type="match status" value="1"/>
</dbReference>
<dbReference type="HAMAP" id="MF_01405">
    <property type="entry name" value="Non_canon_purine_NTPase"/>
    <property type="match status" value="1"/>
</dbReference>
<dbReference type="InterPro" id="IPR020922">
    <property type="entry name" value="dITP/XTP_pyrophosphatase"/>
</dbReference>
<dbReference type="InterPro" id="IPR029001">
    <property type="entry name" value="ITPase-like_fam"/>
</dbReference>
<dbReference type="InterPro" id="IPR002637">
    <property type="entry name" value="RdgB/HAM1"/>
</dbReference>
<dbReference type="NCBIfam" id="NF011397">
    <property type="entry name" value="PRK14822.1"/>
    <property type="match status" value="1"/>
</dbReference>
<dbReference type="NCBIfam" id="TIGR00042">
    <property type="entry name" value="RdgB/HAM1 family non-canonical purine NTP pyrophosphatase"/>
    <property type="match status" value="1"/>
</dbReference>
<dbReference type="PANTHER" id="PTHR11067:SF9">
    <property type="entry name" value="INOSINE TRIPHOSPHATE PYROPHOSPHATASE"/>
    <property type="match status" value="1"/>
</dbReference>
<dbReference type="PANTHER" id="PTHR11067">
    <property type="entry name" value="INOSINE TRIPHOSPHATE PYROPHOSPHATASE/HAM1 PROTEIN"/>
    <property type="match status" value="1"/>
</dbReference>
<dbReference type="Pfam" id="PF01725">
    <property type="entry name" value="Ham1p_like"/>
    <property type="match status" value="1"/>
</dbReference>
<dbReference type="SUPFAM" id="SSF52972">
    <property type="entry name" value="ITPase-like"/>
    <property type="match status" value="1"/>
</dbReference>
<comment type="function">
    <text evidence="1">Pyrophosphatase that catalyzes the hydrolysis of nucleoside triphosphates to their monophosphate derivatives, with a high preference for the non-canonical purine nucleotides XTP (xanthosine triphosphate), dITP (deoxyinosine triphosphate) and ITP. Seems to function as a house-cleaning enzyme that removes non-canonical purine nucleotides from the nucleotide pool, thus preventing their incorporation into DNA/RNA and avoiding chromosomal lesions.</text>
</comment>
<comment type="catalytic activity">
    <reaction evidence="1">
        <text>XTP + H2O = XMP + diphosphate + H(+)</text>
        <dbReference type="Rhea" id="RHEA:28610"/>
        <dbReference type="ChEBI" id="CHEBI:15377"/>
        <dbReference type="ChEBI" id="CHEBI:15378"/>
        <dbReference type="ChEBI" id="CHEBI:33019"/>
        <dbReference type="ChEBI" id="CHEBI:57464"/>
        <dbReference type="ChEBI" id="CHEBI:61314"/>
        <dbReference type="EC" id="3.6.1.66"/>
    </reaction>
</comment>
<comment type="catalytic activity">
    <reaction evidence="1">
        <text>dITP + H2O = dIMP + diphosphate + H(+)</text>
        <dbReference type="Rhea" id="RHEA:28342"/>
        <dbReference type="ChEBI" id="CHEBI:15377"/>
        <dbReference type="ChEBI" id="CHEBI:15378"/>
        <dbReference type="ChEBI" id="CHEBI:33019"/>
        <dbReference type="ChEBI" id="CHEBI:61194"/>
        <dbReference type="ChEBI" id="CHEBI:61382"/>
        <dbReference type="EC" id="3.6.1.66"/>
    </reaction>
</comment>
<comment type="catalytic activity">
    <reaction evidence="1">
        <text>ITP + H2O = IMP + diphosphate + H(+)</text>
        <dbReference type="Rhea" id="RHEA:29399"/>
        <dbReference type="ChEBI" id="CHEBI:15377"/>
        <dbReference type="ChEBI" id="CHEBI:15378"/>
        <dbReference type="ChEBI" id="CHEBI:33019"/>
        <dbReference type="ChEBI" id="CHEBI:58053"/>
        <dbReference type="ChEBI" id="CHEBI:61402"/>
        <dbReference type="EC" id="3.6.1.66"/>
    </reaction>
</comment>
<comment type="cofactor">
    <cofactor evidence="1">
        <name>Mg(2+)</name>
        <dbReference type="ChEBI" id="CHEBI:18420"/>
    </cofactor>
    <text evidence="1">Binds 1 Mg(2+) ion per subunit.</text>
</comment>
<comment type="subunit">
    <text evidence="1">Homodimer.</text>
</comment>
<comment type="similarity">
    <text evidence="1">Belongs to the HAM1 NTPase family.</text>
</comment>
<organism>
    <name type="scientific">Salmonella typhimurium (strain LT2 / SGSC1412 / ATCC 700720)</name>
    <dbReference type="NCBI Taxonomy" id="99287"/>
    <lineage>
        <taxon>Bacteria</taxon>
        <taxon>Pseudomonadati</taxon>
        <taxon>Pseudomonadota</taxon>
        <taxon>Gammaproteobacteria</taxon>
        <taxon>Enterobacterales</taxon>
        <taxon>Enterobacteriaceae</taxon>
        <taxon>Salmonella</taxon>
    </lineage>
</organism>
<accession>Q8ZM45</accession>
<evidence type="ECO:0000255" key="1">
    <source>
        <dbReference type="HAMAP-Rule" id="MF_01405"/>
    </source>
</evidence>